<evidence type="ECO:0000255" key="1">
    <source>
        <dbReference type="HAMAP-Rule" id="MF_00440"/>
    </source>
</evidence>
<gene>
    <name evidence="1" type="primary">nrdR</name>
    <name type="ordered locus">SEN0397</name>
</gene>
<comment type="function">
    <text evidence="1">Negatively regulates transcription of bacterial ribonucleotide reductase nrd genes and operons by binding to NrdR-boxes.</text>
</comment>
<comment type="cofactor">
    <cofactor evidence="1">
        <name>Zn(2+)</name>
        <dbReference type="ChEBI" id="CHEBI:29105"/>
    </cofactor>
    <text evidence="1">Binds 1 zinc ion.</text>
</comment>
<comment type="similarity">
    <text evidence="1">Belongs to the NrdR family.</text>
</comment>
<dbReference type="EMBL" id="AM933172">
    <property type="protein sequence ID" value="CAR31983.1"/>
    <property type="molecule type" value="Genomic_DNA"/>
</dbReference>
<dbReference type="RefSeq" id="WP_000543533.1">
    <property type="nucleotide sequence ID" value="NC_011294.1"/>
</dbReference>
<dbReference type="SMR" id="B5QTG3"/>
<dbReference type="GeneID" id="66754886"/>
<dbReference type="KEGG" id="set:SEN0397"/>
<dbReference type="HOGENOM" id="CLU_108412_0_0_6"/>
<dbReference type="Proteomes" id="UP000000613">
    <property type="component" value="Chromosome"/>
</dbReference>
<dbReference type="GO" id="GO:0005524">
    <property type="term" value="F:ATP binding"/>
    <property type="evidence" value="ECO:0007669"/>
    <property type="project" value="UniProtKB-KW"/>
</dbReference>
<dbReference type="GO" id="GO:0003677">
    <property type="term" value="F:DNA binding"/>
    <property type="evidence" value="ECO:0007669"/>
    <property type="project" value="UniProtKB-KW"/>
</dbReference>
<dbReference type="GO" id="GO:0008270">
    <property type="term" value="F:zinc ion binding"/>
    <property type="evidence" value="ECO:0007669"/>
    <property type="project" value="UniProtKB-UniRule"/>
</dbReference>
<dbReference type="GO" id="GO:0045892">
    <property type="term" value="P:negative regulation of DNA-templated transcription"/>
    <property type="evidence" value="ECO:0007669"/>
    <property type="project" value="UniProtKB-UniRule"/>
</dbReference>
<dbReference type="HAMAP" id="MF_00440">
    <property type="entry name" value="NrdR"/>
    <property type="match status" value="1"/>
</dbReference>
<dbReference type="InterPro" id="IPR005144">
    <property type="entry name" value="ATP-cone_dom"/>
</dbReference>
<dbReference type="InterPro" id="IPR055173">
    <property type="entry name" value="NrdR-like_N"/>
</dbReference>
<dbReference type="InterPro" id="IPR003796">
    <property type="entry name" value="RNR_NrdR-like"/>
</dbReference>
<dbReference type="NCBIfam" id="TIGR00244">
    <property type="entry name" value="transcriptional regulator NrdR"/>
    <property type="match status" value="1"/>
</dbReference>
<dbReference type="PANTHER" id="PTHR30455">
    <property type="entry name" value="TRANSCRIPTIONAL REPRESSOR NRDR"/>
    <property type="match status" value="1"/>
</dbReference>
<dbReference type="PANTHER" id="PTHR30455:SF2">
    <property type="entry name" value="TRANSCRIPTIONAL REPRESSOR NRDR"/>
    <property type="match status" value="1"/>
</dbReference>
<dbReference type="Pfam" id="PF03477">
    <property type="entry name" value="ATP-cone"/>
    <property type="match status" value="1"/>
</dbReference>
<dbReference type="Pfam" id="PF22811">
    <property type="entry name" value="Zn_ribbon_NrdR"/>
    <property type="match status" value="1"/>
</dbReference>
<dbReference type="PROSITE" id="PS51161">
    <property type="entry name" value="ATP_CONE"/>
    <property type="match status" value="1"/>
</dbReference>
<accession>B5QTG3</accession>
<reference key="1">
    <citation type="journal article" date="2008" name="Genome Res.">
        <title>Comparative genome analysis of Salmonella enteritidis PT4 and Salmonella gallinarum 287/91 provides insights into evolutionary and host adaptation pathways.</title>
        <authorList>
            <person name="Thomson N.R."/>
            <person name="Clayton D.J."/>
            <person name="Windhorst D."/>
            <person name="Vernikos G."/>
            <person name="Davidson S."/>
            <person name="Churcher C."/>
            <person name="Quail M.A."/>
            <person name="Stevens M."/>
            <person name="Jones M.A."/>
            <person name="Watson M."/>
            <person name="Barron A."/>
            <person name="Layton A."/>
            <person name="Pickard D."/>
            <person name="Kingsley R.A."/>
            <person name="Bignell A."/>
            <person name="Clark L."/>
            <person name="Harris B."/>
            <person name="Ormond D."/>
            <person name="Abdellah Z."/>
            <person name="Brooks K."/>
            <person name="Cherevach I."/>
            <person name="Chillingworth T."/>
            <person name="Woodward J."/>
            <person name="Norberczak H."/>
            <person name="Lord A."/>
            <person name="Arrowsmith C."/>
            <person name="Jagels K."/>
            <person name="Moule S."/>
            <person name="Mungall K."/>
            <person name="Saunders M."/>
            <person name="Whitehead S."/>
            <person name="Chabalgoity J.A."/>
            <person name="Maskell D."/>
            <person name="Humphreys T."/>
            <person name="Roberts M."/>
            <person name="Barrow P.A."/>
            <person name="Dougan G."/>
            <person name="Parkhill J."/>
        </authorList>
    </citation>
    <scope>NUCLEOTIDE SEQUENCE [LARGE SCALE GENOMIC DNA]</scope>
    <source>
        <strain>P125109</strain>
    </source>
</reference>
<name>NRDR_SALEP</name>
<sequence>MHCPFCFAVDTKVIDSRLVGEGSSVRRRRQCLVCNERFTTFEVAELVMPRVIKSNDVREPFNEDKLRSGMLRALEKRPVSADDVEMALNHIKSQLRATGEREVPSKMIGNLVMEQLKKLDKVAYIRFASVYRSFEDIKDFGEEIARLQD</sequence>
<protein>
    <recommendedName>
        <fullName evidence="1">Transcriptional repressor NrdR</fullName>
    </recommendedName>
</protein>
<proteinExistence type="inferred from homology"/>
<organism>
    <name type="scientific">Salmonella enteritidis PT4 (strain P125109)</name>
    <dbReference type="NCBI Taxonomy" id="550537"/>
    <lineage>
        <taxon>Bacteria</taxon>
        <taxon>Pseudomonadati</taxon>
        <taxon>Pseudomonadota</taxon>
        <taxon>Gammaproteobacteria</taxon>
        <taxon>Enterobacterales</taxon>
        <taxon>Enterobacteriaceae</taxon>
        <taxon>Salmonella</taxon>
    </lineage>
</organism>
<keyword id="KW-0067">ATP-binding</keyword>
<keyword id="KW-0238">DNA-binding</keyword>
<keyword id="KW-0479">Metal-binding</keyword>
<keyword id="KW-0547">Nucleotide-binding</keyword>
<keyword id="KW-0678">Repressor</keyword>
<keyword id="KW-0804">Transcription</keyword>
<keyword id="KW-0805">Transcription regulation</keyword>
<keyword id="KW-0862">Zinc</keyword>
<keyword id="KW-0863">Zinc-finger</keyword>
<feature type="chain" id="PRO_1000124542" description="Transcriptional repressor NrdR">
    <location>
        <begin position="1"/>
        <end position="149"/>
    </location>
</feature>
<feature type="domain" description="ATP-cone" evidence="1">
    <location>
        <begin position="49"/>
        <end position="139"/>
    </location>
</feature>
<feature type="zinc finger region" evidence="1">
    <location>
        <begin position="3"/>
        <end position="34"/>
    </location>
</feature>